<sequence length="577" mass="67739">MPKTISVRVTTMDAELEFAIQPNTTGKQLFDQVVKTIGLREVWFFGLQYQDTKAFSTWLKLNKKVTAQDVRKESPLLFKFRAKFYPEDVSEELIQDITQRLFFLQVKEGILNDDIYCPPETAVLLASYAVQSKYGDFNKEVHKSGYLAGDKLLPQRVLEQHKLNKDQWEERIQVWHEEHRGMLREDAVLEYLKIAQDLEMYGVNYFSIKNKKGSELWLGVDALGLNIYEQNDRLTPKIGFPWSEIRNISFNDKKFVIKPIDKKAPDFVFYAPRLRINKRILALCMGNHELYMRRRKPDTIEVQQMKAQAREEKHQKQMERALLENEKKKRELAEKEKEKIEREKEELMEKLKQIEEQTKKAQQELEEQTRRALELEQERKRAQSEAEKLAKERQEAEEAKEALLQASRDQKKTQEQLASEMAELTARVSQLEMARKKKESEAEECHQKAQMVQEDLEKTRAELKTAMSTPHVAEPAENEHDEQDENGAEASAELRADAMAKDRSEEERTTEAEKNERVQKHLKALTSELANARDESKKTTNDMIHAENMRLGRDKYKTLRQIRQGNTKQRIDEFESM</sequence>
<gene>
    <name evidence="7" type="primary">Msn</name>
</gene>
<reference key="1">
    <citation type="journal article" date="2000" name="J. Pharmacol. Exp. Ther.">
        <title>Cloning and cellular localization of the rat mast cell 78-kDa protein phosphorylated in response to the mast cell 'stabilizer' cromolyn.</title>
        <authorList>
            <person name="Theoharides T.C."/>
            <person name="Wang L."/>
            <person name="Pang X."/>
            <person name="Letourneau R."/>
            <person name="Culm K.E."/>
            <person name="Basu S."/>
            <person name="Wang Y."/>
            <person name="Correia I."/>
        </authorList>
    </citation>
    <scope>NUCLEOTIDE SEQUENCE [MRNA]</scope>
    <scope>PHOSPHORYLATION</scope>
</reference>
<reference key="2">
    <citation type="submission" date="2006-12" db="UniProtKB">
        <authorList>
            <person name="Lubec G."/>
            <person name="Afjehi-Sadat L."/>
        </authorList>
    </citation>
    <scope>PROTEIN SEQUENCE OF 262-272</scope>
    <scope>IDENTIFICATION BY MASS SPECTROMETRY</scope>
    <source>
        <strain>Sprague-Dawley</strain>
        <tissue>Spinal cord</tissue>
    </source>
</reference>
<reference key="3">
    <citation type="journal article" date="2012" name="Nat. Commun.">
        <title>Quantitative maps of protein phosphorylation sites across 14 different rat organs and tissues.</title>
        <authorList>
            <person name="Lundby A."/>
            <person name="Secher A."/>
            <person name="Lage K."/>
            <person name="Nordsborg N.B."/>
            <person name="Dmytriyev A."/>
            <person name="Lundby C."/>
            <person name="Olsen J.V."/>
        </authorList>
    </citation>
    <scope>PHOSPHORYLATION [LARGE SCALE ANALYSIS] AT SER-407</scope>
    <scope>IDENTIFICATION BY MASS SPECTROMETRY [LARGE SCALE ANALYSIS]</scope>
</reference>
<evidence type="ECO:0000250" key="1"/>
<evidence type="ECO:0000250" key="2">
    <source>
        <dbReference type="UniProtKB" id="P26038"/>
    </source>
</evidence>
<evidence type="ECO:0000250" key="3">
    <source>
        <dbReference type="UniProtKB" id="P26041"/>
    </source>
</evidence>
<evidence type="ECO:0000250" key="4">
    <source>
        <dbReference type="UniProtKB" id="P26043"/>
    </source>
</evidence>
<evidence type="ECO:0000255" key="5">
    <source>
        <dbReference type="PROSITE-ProRule" id="PRU00084"/>
    </source>
</evidence>
<evidence type="ECO:0000256" key="6">
    <source>
        <dbReference type="SAM" id="MobiDB-lite"/>
    </source>
</evidence>
<evidence type="ECO:0000312" key="7">
    <source>
        <dbReference type="RGD" id="621260"/>
    </source>
</evidence>
<evidence type="ECO:0007744" key="8">
    <source>
    </source>
</evidence>
<name>MOES_RAT</name>
<organism>
    <name type="scientific">Rattus norvegicus</name>
    <name type="common">Rat</name>
    <dbReference type="NCBI Taxonomy" id="10116"/>
    <lineage>
        <taxon>Eukaryota</taxon>
        <taxon>Metazoa</taxon>
        <taxon>Chordata</taxon>
        <taxon>Craniata</taxon>
        <taxon>Vertebrata</taxon>
        <taxon>Euteleostomi</taxon>
        <taxon>Mammalia</taxon>
        <taxon>Eutheria</taxon>
        <taxon>Euarchontoglires</taxon>
        <taxon>Glires</taxon>
        <taxon>Rodentia</taxon>
        <taxon>Myomorpha</taxon>
        <taxon>Muroidea</taxon>
        <taxon>Muridae</taxon>
        <taxon>Murinae</taxon>
        <taxon>Rattus</taxon>
    </lineage>
</organism>
<comment type="function">
    <text evidence="2 3">Ezrin-radixin-moesin (ERM) family protein that connects the actin cytoskeleton to the plasma membrane and thereby regulates the structure and function of specific domains of the cell cortex. Tethers actin filaments by oscillating between a resting and an activated state providing transient interactions between moesin and the actin cytoskeleton. Once phosphorylated on its C-terminal threonine, moesin is activated leading to interaction with F-actin and cytoskeletal rearrangement. These rearrangements regulate many cellular processes, including cell shape determination, membrane transport, and signal transduction. The role of moesin is particularly important in immunity acting on both T and B-cells homeostasis and self-tolerance, regulating lymphocyte egress from lymphoid organs (By similarity). Modulates phagolysosomal biogenesis in macrophages (By similarity). Participates also in immunologic synapse formation (By similarity).</text>
</comment>
<comment type="activity regulation">
    <text evidence="2">A head-to-tail association, of the N-terminal and C-terminal halves results in a closed conformation (inactive form) which is incapable of actin or membrane-binding.</text>
</comment>
<comment type="subunit">
    <text evidence="2 3">In resting T-cells, part of a PAG1-NHERF1-MSN complex which is disrupted upon TCR activation. Interacts with NHERF1. Interacts with PPP1R16B. Interacts with PDZD8. Interacts with SELPLG and SYK; these interactions mediate the activation of SYK by SELPLG. Interacts with PDPN (via cytoplasmic domain); this interaction activates RHOA and promotes epithelial-mesenchymal transition. Interacts with SPN/CD43 cytoplasmic tail (By similarity). Interacts with CD44 (By similarity). Interacts with ICAM2 (By similarity). Interacts with ICAM3 (via C-terminus). Interacts with PDZD8. Interacts with F-actin. Interacts with CD46 (By similarity). Interacts with PTPN6 (By similarity).</text>
</comment>
<comment type="subcellular location">
    <subcellularLocation>
        <location evidence="2">Cell membrane</location>
        <topology evidence="3">Peripheral membrane protein</topology>
        <orientation evidence="3">Cytoplasmic side</orientation>
    </subcellularLocation>
    <subcellularLocation>
        <location evidence="3">Cytoplasm</location>
        <location evidence="3">Cytoskeleton</location>
    </subcellularLocation>
    <subcellularLocation>
        <location evidence="3">Apical cell membrane</location>
        <topology evidence="3">Peripheral membrane protein</topology>
        <orientation evidence="3">Cytoplasmic side</orientation>
    </subcellularLocation>
    <subcellularLocation>
        <location evidence="3">Cell projection</location>
        <location evidence="3">Microvillus membrane</location>
        <topology evidence="3">Peripheral membrane protein</topology>
        <orientation evidence="3">Cytoplasmic side</orientation>
    </subcellularLocation>
    <subcellularLocation>
        <location evidence="3">Cell projection</location>
        <location evidence="3">Microvillus</location>
    </subcellularLocation>
    <text evidence="2 3">Phosphorylated form is enriched in microvilli-like structures at apical membrane. Increased cell membrane localization of both phosphorylated and non-phosphorylated forms seen after thrombin treatment (By similarity). Localizes at the uropods of T lymphoblasts (By similarity).</text>
</comment>
<comment type="domain">
    <text evidence="2">The [IL]-x-C-x-x-[DE] motif is a proposed target motif for cysteine S-nitrosylation mediated by the iNOS-S100A8/A9 transnitrosylase complex.</text>
</comment>
<comment type="PTM">
    <text evidence="1">Phosphorylation on Thr-558 is crucial for the formation of microvilli-like structures. Phosphorylation by ROCK2 suppresses the head-to-tail association of the N-terminal and C-terminal halves resulting in an opened conformation which is capable of actin and membrane-binding. Phosphorylation on Thr-558 by STK10 negatively regulates lymphocyte migration and polarization (By similarity).</text>
</comment>
<comment type="PTM">
    <text evidence="2">S-nitrosylation of Cys-117 is induced by interferon-gamma and oxidatively-modified low-densitity lipoprotein (LDL(ox)) implicating the iNOS-S100A8/9 transnitrosylase complex.</text>
</comment>
<keyword id="KW-0007">Acetylation</keyword>
<keyword id="KW-1003">Cell membrane</keyword>
<keyword id="KW-0966">Cell projection</keyword>
<keyword id="KW-0963">Cytoplasm</keyword>
<keyword id="KW-0206">Cytoskeleton</keyword>
<keyword id="KW-0903">Direct protein sequencing</keyword>
<keyword id="KW-0472">Membrane</keyword>
<keyword id="KW-0597">Phosphoprotein</keyword>
<keyword id="KW-1185">Reference proteome</keyword>
<keyword id="KW-0702">S-nitrosylation</keyword>
<proteinExistence type="evidence at protein level"/>
<feature type="chain" id="PRO_0000219419" description="Moesin">
    <location>
        <begin position="1"/>
        <end position="577"/>
    </location>
</feature>
<feature type="domain" description="FERM" evidence="5">
    <location>
        <begin position="2"/>
        <end position="295"/>
    </location>
</feature>
<feature type="region of interest" description="Disordered" evidence="6">
    <location>
        <begin position="322"/>
        <end position="342"/>
    </location>
</feature>
<feature type="region of interest" description="Disordered" evidence="6">
    <location>
        <begin position="358"/>
        <end position="453"/>
    </location>
</feature>
<feature type="region of interest" description="Disordered" evidence="6">
    <location>
        <begin position="468"/>
        <end position="549"/>
    </location>
</feature>
<feature type="short sequence motif" description="[IL]-x-C-x-x-[DE] motif" evidence="2">
    <location>
        <begin position="115"/>
        <end position="120"/>
    </location>
</feature>
<feature type="compositionally biased region" description="Basic and acidic residues" evidence="6">
    <location>
        <begin position="358"/>
        <end position="401"/>
    </location>
</feature>
<feature type="compositionally biased region" description="Basic and acidic residues" evidence="6">
    <location>
        <begin position="438"/>
        <end position="447"/>
    </location>
</feature>
<feature type="compositionally biased region" description="Basic and acidic residues" evidence="6">
    <location>
        <begin position="492"/>
        <end position="519"/>
    </location>
</feature>
<feature type="compositionally biased region" description="Basic and acidic residues" evidence="6">
    <location>
        <begin position="531"/>
        <end position="549"/>
    </location>
</feature>
<feature type="modified residue" description="Phosphoserine" evidence="2">
    <location>
        <position position="74"/>
    </location>
</feature>
<feature type="modified residue" description="N6-acetyllysine" evidence="2">
    <location>
        <position position="79"/>
    </location>
</feature>
<feature type="modified residue" description="N6-succinyllysine" evidence="4">
    <location>
        <position position="83"/>
    </location>
</feature>
<feature type="modified residue" description="Phosphotyrosine" evidence="2">
    <location>
        <position position="116"/>
    </location>
</feature>
<feature type="modified residue" description="S-nitrosocysteine" evidence="2">
    <location>
        <position position="117"/>
    </location>
</feature>
<feature type="modified residue" description="N6-acetyllysine" evidence="2">
    <location>
        <position position="139"/>
    </location>
</feature>
<feature type="modified residue" description="N6-acetyllysine" evidence="3">
    <location>
        <position position="165"/>
    </location>
</feature>
<feature type="modified residue" description="Phosphoserine" evidence="8">
    <location>
        <position position="407"/>
    </location>
</feature>
<feature type="modified residue" description="Phosphoserine" evidence="2">
    <location>
        <position position="527"/>
    </location>
</feature>
<feature type="modified residue" description="Phosphothreonine; by ROCK2 and STK10" evidence="2">
    <location>
        <position position="558"/>
    </location>
</feature>
<dbReference type="EMBL" id="AF004811">
    <property type="protein sequence ID" value="AAB61666.1"/>
    <property type="molecule type" value="mRNA"/>
</dbReference>
<dbReference type="RefSeq" id="NP_110490.1">
    <property type="nucleotide sequence ID" value="NM_030863.1"/>
</dbReference>
<dbReference type="SMR" id="O35763"/>
<dbReference type="BioGRID" id="249518">
    <property type="interactions" value="4"/>
</dbReference>
<dbReference type="CORUM" id="O35763"/>
<dbReference type="FunCoup" id="O35763">
    <property type="interactions" value="2040"/>
</dbReference>
<dbReference type="IntAct" id="O35763">
    <property type="interactions" value="5"/>
</dbReference>
<dbReference type="MINT" id="O35763"/>
<dbReference type="STRING" id="10116.ENSRNOP00000068359"/>
<dbReference type="GlyGen" id="O35763">
    <property type="glycosylation" value="1 site, 1 O-linked glycan (1 site)"/>
</dbReference>
<dbReference type="iPTMnet" id="O35763"/>
<dbReference type="PhosphoSitePlus" id="O35763"/>
<dbReference type="SwissPalm" id="O35763"/>
<dbReference type="jPOST" id="O35763"/>
<dbReference type="PaxDb" id="10116-ENSRNOP00000068359"/>
<dbReference type="GeneID" id="81521"/>
<dbReference type="KEGG" id="rno:81521"/>
<dbReference type="AGR" id="RGD:621260"/>
<dbReference type="CTD" id="4478"/>
<dbReference type="RGD" id="621260">
    <property type="gene designation" value="Msn"/>
</dbReference>
<dbReference type="eggNOG" id="KOG3529">
    <property type="taxonomic scope" value="Eukaryota"/>
</dbReference>
<dbReference type="InParanoid" id="O35763"/>
<dbReference type="PhylomeDB" id="O35763"/>
<dbReference type="Reactome" id="R-RNO-437239">
    <property type="pathway name" value="Recycling pathway of L1"/>
</dbReference>
<dbReference type="PRO" id="PR:O35763"/>
<dbReference type="Proteomes" id="UP000002494">
    <property type="component" value="Unplaced"/>
</dbReference>
<dbReference type="GO" id="GO:0005912">
    <property type="term" value="C:adherens junction"/>
    <property type="evidence" value="ECO:0000318"/>
    <property type="project" value="GO_Central"/>
</dbReference>
<dbReference type="GO" id="GO:0045177">
    <property type="term" value="C:apical part of cell"/>
    <property type="evidence" value="ECO:0000266"/>
    <property type="project" value="RGD"/>
</dbReference>
<dbReference type="GO" id="GO:0016324">
    <property type="term" value="C:apical plasma membrane"/>
    <property type="evidence" value="ECO:0000266"/>
    <property type="project" value="RGD"/>
</dbReference>
<dbReference type="GO" id="GO:0016323">
    <property type="term" value="C:basolateral plasma membrane"/>
    <property type="evidence" value="ECO:0000266"/>
    <property type="project" value="RGD"/>
</dbReference>
<dbReference type="GO" id="GO:0071944">
    <property type="term" value="C:cell periphery"/>
    <property type="evidence" value="ECO:0000266"/>
    <property type="project" value="RGD"/>
</dbReference>
<dbReference type="GO" id="GO:0009986">
    <property type="term" value="C:cell surface"/>
    <property type="evidence" value="ECO:0000314"/>
    <property type="project" value="RGD"/>
</dbReference>
<dbReference type="GO" id="GO:0051286">
    <property type="term" value="C:cell tip"/>
    <property type="evidence" value="ECO:0000314"/>
    <property type="project" value="RGD"/>
</dbReference>
<dbReference type="GO" id="GO:0009898">
    <property type="term" value="C:cytoplasmic side of plasma membrane"/>
    <property type="evidence" value="ECO:0000314"/>
    <property type="project" value="RGD"/>
</dbReference>
<dbReference type="GO" id="GO:0005856">
    <property type="term" value="C:cytoskeleton"/>
    <property type="evidence" value="ECO:0007669"/>
    <property type="project" value="UniProtKB-SubCell"/>
</dbReference>
<dbReference type="GO" id="GO:0030175">
    <property type="term" value="C:filopodium"/>
    <property type="evidence" value="ECO:0000266"/>
    <property type="project" value="RGD"/>
</dbReference>
<dbReference type="GO" id="GO:0031527">
    <property type="term" value="C:filopodium membrane"/>
    <property type="evidence" value="ECO:0000314"/>
    <property type="project" value="RGD"/>
</dbReference>
<dbReference type="GO" id="GO:0005925">
    <property type="term" value="C:focal adhesion"/>
    <property type="evidence" value="ECO:0000266"/>
    <property type="project" value="RGD"/>
</dbReference>
<dbReference type="GO" id="GO:0005902">
    <property type="term" value="C:microvillus"/>
    <property type="evidence" value="ECO:0000250"/>
    <property type="project" value="UniProtKB"/>
</dbReference>
<dbReference type="GO" id="GO:0031528">
    <property type="term" value="C:microvillus membrane"/>
    <property type="evidence" value="ECO:0007669"/>
    <property type="project" value="UniProtKB-SubCell"/>
</dbReference>
<dbReference type="GO" id="GO:0048471">
    <property type="term" value="C:perinuclear region of cytoplasm"/>
    <property type="evidence" value="ECO:0000266"/>
    <property type="project" value="RGD"/>
</dbReference>
<dbReference type="GO" id="GO:0005886">
    <property type="term" value="C:plasma membrane"/>
    <property type="evidence" value="ECO:0000318"/>
    <property type="project" value="GO_Central"/>
</dbReference>
<dbReference type="GO" id="GO:0031143">
    <property type="term" value="C:pseudopodium"/>
    <property type="evidence" value="ECO:0000266"/>
    <property type="project" value="RGD"/>
</dbReference>
<dbReference type="GO" id="GO:0030315">
    <property type="term" value="C:T-tubule"/>
    <property type="evidence" value="ECO:0000314"/>
    <property type="project" value="RGD"/>
</dbReference>
<dbReference type="GO" id="GO:0001931">
    <property type="term" value="C:uropod"/>
    <property type="evidence" value="ECO:0000266"/>
    <property type="project" value="RGD"/>
</dbReference>
<dbReference type="GO" id="GO:0003779">
    <property type="term" value="F:actin binding"/>
    <property type="evidence" value="ECO:0000314"/>
    <property type="project" value="RGD"/>
</dbReference>
<dbReference type="GO" id="GO:0050839">
    <property type="term" value="F:cell adhesion molecule binding"/>
    <property type="evidence" value="ECO:0000266"/>
    <property type="project" value="RGD"/>
</dbReference>
<dbReference type="GO" id="GO:0003725">
    <property type="term" value="F:double-stranded RNA binding"/>
    <property type="evidence" value="ECO:0000266"/>
    <property type="project" value="RGD"/>
</dbReference>
<dbReference type="GO" id="GO:0019899">
    <property type="term" value="F:enzyme binding"/>
    <property type="evidence" value="ECO:0000266"/>
    <property type="project" value="RGD"/>
</dbReference>
<dbReference type="GO" id="GO:0019901">
    <property type="term" value="F:protein kinase binding"/>
    <property type="evidence" value="ECO:0000266"/>
    <property type="project" value="RGD"/>
</dbReference>
<dbReference type="GO" id="GO:0030674">
    <property type="term" value="F:protein-macromolecule adaptor activity"/>
    <property type="evidence" value="ECO:0000304"/>
    <property type="project" value="RGD"/>
</dbReference>
<dbReference type="GO" id="GO:0005102">
    <property type="term" value="F:signaling receptor binding"/>
    <property type="evidence" value="ECO:0000266"/>
    <property type="project" value="RGD"/>
</dbReference>
<dbReference type="GO" id="GO:0071394">
    <property type="term" value="P:cellular response to testosterone stimulus"/>
    <property type="evidence" value="ECO:0000266"/>
    <property type="project" value="RGD"/>
</dbReference>
<dbReference type="GO" id="GO:0061028">
    <property type="term" value="P:establishment of endothelial barrier"/>
    <property type="evidence" value="ECO:0000266"/>
    <property type="project" value="RGD"/>
</dbReference>
<dbReference type="GO" id="GO:0045198">
    <property type="term" value="P:establishment of epithelial cell apical/basal polarity"/>
    <property type="evidence" value="ECO:0000266"/>
    <property type="project" value="RGD"/>
</dbReference>
<dbReference type="GO" id="GO:0022612">
    <property type="term" value="P:gland morphogenesis"/>
    <property type="evidence" value="ECO:0000266"/>
    <property type="project" value="RGD"/>
</dbReference>
<dbReference type="GO" id="GO:0001771">
    <property type="term" value="P:immunological synapse formation"/>
    <property type="evidence" value="ECO:0000250"/>
    <property type="project" value="UniProtKB"/>
</dbReference>
<dbReference type="GO" id="GO:0007159">
    <property type="term" value="P:leukocyte cell-cell adhesion"/>
    <property type="evidence" value="ECO:0000266"/>
    <property type="project" value="RGD"/>
</dbReference>
<dbReference type="GO" id="GO:0050900">
    <property type="term" value="P:leukocyte migration"/>
    <property type="evidence" value="ECO:0000266"/>
    <property type="project" value="RGD"/>
</dbReference>
<dbReference type="GO" id="GO:0022614">
    <property type="term" value="P:membrane to membrane docking"/>
    <property type="evidence" value="ECO:0000266"/>
    <property type="project" value="RGD"/>
</dbReference>
<dbReference type="GO" id="GO:2000643">
    <property type="term" value="P:positive regulation of early endosome to late endosome transport"/>
    <property type="evidence" value="ECO:0000266"/>
    <property type="project" value="RGD"/>
</dbReference>
<dbReference type="GO" id="GO:0010628">
    <property type="term" value="P:positive regulation of gene expression"/>
    <property type="evidence" value="ECO:0000266"/>
    <property type="project" value="RGD"/>
</dbReference>
<dbReference type="GO" id="GO:0071803">
    <property type="term" value="P:positive regulation of podosome assembly"/>
    <property type="evidence" value="ECO:0000266"/>
    <property type="project" value="RGD"/>
</dbReference>
<dbReference type="GO" id="GO:0045732">
    <property type="term" value="P:positive regulation of protein catabolic process"/>
    <property type="evidence" value="ECO:0000266"/>
    <property type="project" value="RGD"/>
</dbReference>
<dbReference type="GO" id="GO:1902966">
    <property type="term" value="P:positive regulation of protein localization to early endosome"/>
    <property type="evidence" value="ECO:0000266"/>
    <property type="project" value="RGD"/>
</dbReference>
<dbReference type="GO" id="GO:0008360">
    <property type="term" value="P:regulation of cell shape"/>
    <property type="evidence" value="ECO:0000266"/>
    <property type="project" value="RGD"/>
</dbReference>
<dbReference type="GO" id="GO:0008361">
    <property type="term" value="P:regulation of cell size"/>
    <property type="evidence" value="ECO:0000266"/>
    <property type="project" value="RGD"/>
</dbReference>
<dbReference type="GO" id="GO:2000401">
    <property type="term" value="P:regulation of lymphocyte migration"/>
    <property type="evidence" value="ECO:0000266"/>
    <property type="project" value="RGD"/>
</dbReference>
<dbReference type="GO" id="GO:1902115">
    <property type="term" value="P:regulation of organelle assembly"/>
    <property type="evidence" value="ECO:0000266"/>
    <property type="project" value="RGD"/>
</dbReference>
<dbReference type="GO" id="GO:0097305">
    <property type="term" value="P:response to alcohol"/>
    <property type="evidence" value="ECO:0000270"/>
    <property type="project" value="RGD"/>
</dbReference>
<dbReference type="GO" id="GO:0070489">
    <property type="term" value="P:T cell aggregation"/>
    <property type="evidence" value="ECO:0000250"/>
    <property type="project" value="UniProtKB"/>
</dbReference>
<dbReference type="GO" id="GO:0072678">
    <property type="term" value="P:T cell migration"/>
    <property type="evidence" value="ECO:0000250"/>
    <property type="project" value="UniProtKB"/>
</dbReference>
<dbReference type="GO" id="GO:0042098">
    <property type="term" value="P:T cell proliferation"/>
    <property type="evidence" value="ECO:0000250"/>
    <property type="project" value="UniProtKB"/>
</dbReference>
<dbReference type="CDD" id="cd14473">
    <property type="entry name" value="FERM_B-lobe"/>
    <property type="match status" value="1"/>
</dbReference>
<dbReference type="CDD" id="cd13194">
    <property type="entry name" value="FERM_C_ERM"/>
    <property type="match status" value="1"/>
</dbReference>
<dbReference type="CDD" id="cd17187">
    <property type="entry name" value="FERM_F1_ERM"/>
    <property type="match status" value="1"/>
</dbReference>
<dbReference type="FunFam" id="2.30.29.30:FF:000003">
    <property type="entry name" value="Radixin isoform 1"/>
    <property type="match status" value="1"/>
</dbReference>
<dbReference type="FunFam" id="1.20.80.10:FF:000002">
    <property type="entry name" value="radixin isoform X1"/>
    <property type="match status" value="1"/>
</dbReference>
<dbReference type="FunFam" id="3.10.20.90:FF:000013">
    <property type="entry name" value="radixin isoform X1"/>
    <property type="match status" value="1"/>
</dbReference>
<dbReference type="FunFam" id="1.20.5.450:FF:000001">
    <property type="entry name" value="radixin isoform X2"/>
    <property type="match status" value="1"/>
</dbReference>
<dbReference type="Gene3D" id="1.20.5.450">
    <property type="match status" value="1"/>
</dbReference>
<dbReference type="Gene3D" id="1.20.80.10">
    <property type="match status" value="1"/>
</dbReference>
<dbReference type="Gene3D" id="6.10.360.10">
    <property type="match status" value="1"/>
</dbReference>
<dbReference type="Gene3D" id="3.10.20.90">
    <property type="entry name" value="Phosphatidylinositol 3-kinase Catalytic Subunit, Chain A, domain 1"/>
    <property type="match status" value="1"/>
</dbReference>
<dbReference type="Gene3D" id="2.30.29.30">
    <property type="entry name" value="Pleckstrin-homology domain (PH domain)/Phosphotyrosine-binding domain (PTB)"/>
    <property type="match status" value="1"/>
</dbReference>
<dbReference type="InterPro" id="IPR019749">
    <property type="entry name" value="Band_41_domain"/>
</dbReference>
<dbReference type="InterPro" id="IPR011174">
    <property type="entry name" value="ERM"/>
</dbReference>
<dbReference type="InterPro" id="IPR011259">
    <property type="entry name" value="ERM_C_dom"/>
</dbReference>
<dbReference type="InterPro" id="IPR041789">
    <property type="entry name" value="ERM_FERM_C"/>
</dbReference>
<dbReference type="InterPro" id="IPR046810">
    <property type="entry name" value="ERM_helical"/>
</dbReference>
<dbReference type="InterPro" id="IPR000798">
    <property type="entry name" value="Ez/rad/moesin-like"/>
</dbReference>
<dbReference type="InterPro" id="IPR014352">
    <property type="entry name" value="FERM/acyl-CoA-bd_prot_sf"/>
</dbReference>
<dbReference type="InterPro" id="IPR035963">
    <property type="entry name" value="FERM_2"/>
</dbReference>
<dbReference type="InterPro" id="IPR019748">
    <property type="entry name" value="FERM_central"/>
</dbReference>
<dbReference type="InterPro" id="IPR019747">
    <property type="entry name" value="FERM_CS"/>
</dbReference>
<dbReference type="InterPro" id="IPR000299">
    <property type="entry name" value="FERM_domain"/>
</dbReference>
<dbReference type="InterPro" id="IPR018979">
    <property type="entry name" value="FERM_N"/>
</dbReference>
<dbReference type="InterPro" id="IPR018980">
    <property type="entry name" value="FERM_PH-like_C"/>
</dbReference>
<dbReference type="InterPro" id="IPR008954">
    <property type="entry name" value="Moesin_tail_sf"/>
</dbReference>
<dbReference type="InterPro" id="IPR011993">
    <property type="entry name" value="PH-like_dom_sf"/>
</dbReference>
<dbReference type="InterPro" id="IPR029071">
    <property type="entry name" value="Ubiquitin-like_domsf"/>
</dbReference>
<dbReference type="PANTHER" id="PTHR23281">
    <property type="entry name" value="MERLIN/MOESIN/EZRIN/RADIXIN"/>
    <property type="match status" value="1"/>
</dbReference>
<dbReference type="Pfam" id="PF00769">
    <property type="entry name" value="ERM_C"/>
    <property type="match status" value="1"/>
</dbReference>
<dbReference type="Pfam" id="PF20492">
    <property type="entry name" value="ERM_helical"/>
    <property type="match status" value="1"/>
</dbReference>
<dbReference type="Pfam" id="PF09380">
    <property type="entry name" value="FERM_C"/>
    <property type="match status" value="1"/>
</dbReference>
<dbReference type="Pfam" id="PF00373">
    <property type="entry name" value="FERM_M"/>
    <property type="match status" value="1"/>
</dbReference>
<dbReference type="Pfam" id="PF09379">
    <property type="entry name" value="FERM_N"/>
    <property type="match status" value="1"/>
</dbReference>
<dbReference type="PIRSF" id="PIRSF002305">
    <property type="entry name" value="ERM"/>
    <property type="match status" value="1"/>
</dbReference>
<dbReference type="PRINTS" id="PR00935">
    <property type="entry name" value="BAND41"/>
</dbReference>
<dbReference type="PRINTS" id="PR00661">
    <property type="entry name" value="ERMFAMILY"/>
</dbReference>
<dbReference type="SMART" id="SM00295">
    <property type="entry name" value="B41"/>
    <property type="match status" value="1"/>
</dbReference>
<dbReference type="SMART" id="SM01196">
    <property type="entry name" value="FERM_C"/>
    <property type="match status" value="1"/>
</dbReference>
<dbReference type="SUPFAM" id="SSF48678">
    <property type="entry name" value="Moesin tail domain"/>
    <property type="match status" value="1"/>
</dbReference>
<dbReference type="SUPFAM" id="SSF50729">
    <property type="entry name" value="PH domain-like"/>
    <property type="match status" value="1"/>
</dbReference>
<dbReference type="SUPFAM" id="SSF47031">
    <property type="entry name" value="Second domain of FERM"/>
    <property type="match status" value="1"/>
</dbReference>
<dbReference type="SUPFAM" id="SSF54236">
    <property type="entry name" value="Ubiquitin-like"/>
    <property type="match status" value="1"/>
</dbReference>
<dbReference type="PROSITE" id="PS00660">
    <property type="entry name" value="FERM_1"/>
    <property type="match status" value="1"/>
</dbReference>
<dbReference type="PROSITE" id="PS00661">
    <property type="entry name" value="FERM_2"/>
    <property type="match status" value="1"/>
</dbReference>
<dbReference type="PROSITE" id="PS50057">
    <property type="entry name" value="FERM_3"/>
    <property type="match status" value="1"/>
</dbReference>
<accession>O35763</accession>
<protein>
    <recommendedName>
        <fullName evidence="2">Moesin</fullName>
    </recommendedName>
    <alternativeName>
        <fullName>Membrane-organizing extension spike protein</fullName>
    </alternativeName>
</protein>